<name>RS17_STRAW</name>
<dbReference type="EMBL" id="BA000030">
    <property type="protein sequence ID" value="BAC72647.1"/>
    <property type="molecule type" value="Genomic_DNA"/>
</dbReference>
<dbReference type="RefSeq" id="WP_010986349.1">
    <property type="nucleotide sequence ID" value="NZ_JZJK01000077.1"/>
</dbReference>
<dbReference type="SMR" id="Q82DN6"/>
<dbReference type="GeneID" id="41542018"/>
<dbReference type="KEGG" id="sma:SAVERM_4935"/>
<dbReference type="eggNOG" id="COG0186">
    <property type="taxonomic scope" value="Bacteria"/>
</dbReference>
<dbReference type="HOGENOM" id="CLU_073626_1_0_11"/>
<dbReference type="OrthoDB" id="9811714at2"/>
<dbReference type="Proteomes" id="UP000000428">
    <property type="component" value="Chromosome"/>
</dbReference>
<dbReference type="GO" id="GO:0022627">
    <property type="term" value="C:cytosolic small ribosomal subunit"/>
    <property type="evidence" value="ECO:0007669"/>
    <property type="project" value="TreeGrafter"/>
</dbReference>
<dbReference type="GO" id="GO:0019843">
    <property type="term" value="F:rRNA binding"/>
    <property type="evidence" value="ECO:0007669"/>
    <property type="project" value="UniProtKB-UniRule"/>
</dbReference>
<dbReference type="GO" id="GO:0003735">
    <property type="term" value="F:structural constituent of ribosome"/>
    <property type="evidence" value="ECO:0007669"/>
    <property type="project" value="InterPro"/>
</dbReference>
<dbReference type="GO" id="GO:0006412">
    <property type="term" value="P:translation"/>
    <property type="evidence" value="ECO:0007669"/>
    <property type="project" value="UniProtKB-UniRule"/>
</dbReference>
<dbReference type="CDD" id="cd00364">
    <property type="entry name" value="Ribosomal_uS17"/>
    <property type="match status" value="1"/>
</dbReference>
<dbReference type="FunFam" id="2.40.50.140:FF:000026">
    <property type="entry name" value="30S ribosomal protein S17"/>
    <property type="match status" value="1"/>
</dbReference>
<dbReference type="Gene3D" id="2.40.50.140">
    <property type="entry name" value="Nucleic acid-binding proteins"/>
    <property type="match status" value="1"/>
</dbReference>
<dbReference type="HAMAP" id="MF_01345_B">
    <property type="entry name" value="Ribosomal_uS17_B"/>
    <property type="match status" value="1"/>
</dbReference>
<dbReference type="InterPro" id="IPR012340">
    <property type="entry name" value="NA-bd_OB-fold"/>
</dbReference>
<dbReference type="InterPro" id="IPR000266">
    <property type="entry name" value="Ribosomal_uS17"/>
</dbReference>
<dbReference type="InterPro" id="IPR019984">
    <property type="entry name" value="Ribosomal_uS17_bact/chlr"/>
</dbReference>
<dbReference type="InterPro" id="IPR019979">
    <property type="entry name" value="Ribosomal_uS17_CS"/>
</dbReference>
<dbReference type="NCBIfam" id="NF004123">
    <property type="entry name" value="PRK05610.1"/>
    <property type="match status" value="1"/>
</dbReference>
<dbReference type="NCBIfam" id="TIGR03635">
    <property type="entry name" value="uS17_bact"/>
    <property type="match status" value="1"/>
</dbReference>
<dbReference type="PANTHER" id="PTHR10744">
    <property type="entry name" value="40S RIBOSOMAL PROTEIN S11 FAMILY MEMBER"/>
    <property type="match status" value="1"/>
</dbReference>
<dbReference type="PANTHER" id="PTHR10744:SF1">
    <property type="entry name" value="SMALL RIBOSOMAL SUBUNIT PROTEIN US17M"/>
    <property type="match status" value="1"/>
</dbReference>
<dbReference type="Pfam" id="PF00366">
    <property type="entry name" value="Ribosomal_S17"/>
    <property type="match status" value="1"/>
</dbReference>
<dbReference type="PRINTS" id="PR00973">
    <property type="entry name" value="RIBOSOMALS17"/>
</dbReference>
<dbReference type="SUPFAM" id="SSF50249">
    <property type="entry name" value="Nucleic acid-binding proteins"/>
    <property type="match status" value="1"/>
</dbReference>
<dbReference type="PROSITE" id="PS00056">
    <property type="entry name" value="RIBOSOMAL_S17"/>
    <property type="match status" value="1"/>
</dbReference>
<reference key="1">
    <citation type="journal article" date="2001" name="Proc. Natl. Acad. Sci. U.S.A.">
        <title>Genome sequence of an industrial microorganism Streptomyces avermitilis: deducing the ability of producing secondary metabolites.</title>
        <authorList>
            <person name="Omura S."/>
            <person name="Ikeda H."/>
            <person name="Ishikawa J."/>
            <person name="Hanamoto A."/>
            <person name="Takahashi C."/>
            <person name="Shinose M."/>
            <person name="Takahashi Y."/>
            <person name="Horikawa H."/>
            <person name="Nakazawa H."/>
            <person name="Osonoe T."/>
            <person name="Kikuchi H."/>
            <person name="Shiba T."/>
            <person name="Sakaki Y."/>
            <person name="Hattori M."/>
        </authorList>
    </citation>
    <scope>NUCLEOTIDE SEQUENCE [LARGE SCALE GENOMIC DNA]</scope>
    <source>
        <strain>ATCC 31267 / DSM 46492 / JCM 5070 / NBRC 14893 / NCIMB 12804 / NRRL 8165 / MA-4680</strain>
    </source>
</reference>
<reference key="2">
    <citation type="journal article" date="2003" name="Nat. Biotechnol.">
        <title>Complete genome sequence and comparative analysis of the industrial microorganism Streptomyces avermitilis.</title>
        <authorList>
            <person name="Ikeda H."/>
            <person name="Ishikawa J."/>
            <person name="Hanamoto A."/>
            <person name="Shinose M."/>
            <person name="Kikuchi H."/>
            <person name="Shiba T."/>
            <person name="Sakaki Y."/>
            <person name="Hattori M."/>
            <person name="Omura S."/>
        </authorList>
    </citation>
    <scope>NUCLEOTIDE SEQUENCE [LARGE SCALE GENOMIC DNA]</scope>
    <source>
        <strain>ATCC 31267 / DSM 46492 / JCM 5070 / NBRC 14893 / NCIMB 12804 / NRRL 8165 / MA-4680</strain>
    </source>
</reference>
<proteinExistence type="inferred from homology"/>
<protein>
    <recommendedName>
        <fullName evidence="1">Small ribosomal subunit protein uS17</fullName>
    </recommendedName>
    <alternativeName>
        <fullName evidence="2">30S ribosomal protein S17</fullName>
    </alternativeName>
</protein>
<feature type="chain" id="PRO_0000233583" description="Small ribosomal subunit protein uS17">
    <location>
        <begin position="1"/>
        <end position="94"/>
    </location>
</feature>
<sequence>MSESNVTETNEQRGFRKTREGLVVSDKMDKTVVVAVEDRVKHALYGKVIRRTNKLKAHDEQNAAGVGDRVLLMETRPLSATKRWRVVEILEKAK</sequence>
<gene>
    <name evidence="1" type="primary">rpsQ</name>
    <name type="ordered locus">SAV_4935</name>
</gene>
<evidence type="ECO:0000255" key="1">
    <source>
        <dbReference type="HAMAP-Rule" id="MF_01345"/>
    </source>
</evidence>
<evidence type="ECO:0000305" key="2"/>
<accession>Q82DN6</accession>
<comment type="function">
    <text evidence="1">One of the primary rRNA binding proteins, it binds specifically to the 5'-end of 16S ribosomal RNA.</text>
</comment>
<comment type="subunit">
    <text evidence="1">Part of the 30S ribosomal subunit.</text>
</comment>
<comment type="similarity">
    <text evidence="1">Belongs to the universal ribosomal protein uS17 family.</text>
</comment>
<keyword id="KW-1185">Reference proteome</keyword>
<keyword id="KW-0687">Ribonucleoprotein</keyword>
<keyword id="KW-0689">Ribosomal protein</keyword>
<keyword id="KW-0694">RNA-binding</keyword>
<keyword id="KW-0699">rRNA-binding</keyword>
<organism>
    <name type="scientific">Streptomyces avermitilis (strain ATCC 31267 / DSM 46492 / JCM 5070 / NBRC 14893 / NCIMB 12804 / NRRL 8165 / MA-4680)</name>
    <dbReference type="NCBI Taxonomy" id="227882"/>
    <lineage>
        <taxon>Bacteria</taxon>
        <taxon>Bacillati</taxon>
        <taxon>Actinomycetota</taxon>
        <taxon>Actinomycetes</taxon>
        <taxon>Kitasatosporales</taxon>
        <taxon>Streptomycetaceae</taxon>
        <taxon>Streptomyces</taxon>
    </lineage>
</organism>